<gene>
    <name type="ordered locus">PF1381</name>
</gene>
<comment type="similarity">
    <text evidence="1">Belongs to the UPF0179 family.</text>
</comment>
<sequence>MVITLVGEKLAKPGVEFIYYGPAEPCKSCRLARVCTGNLEPGRRYKIIKVRNMEYPCLLHEGKVRVVEVVEPAIDVIIEPRYAVAGSKITLKFVECDDPEKVDLVRPEGLFEGDVVKILEIIGDIECNGRKYKIAKVIRENTQK</sequence>
<proteinExistence type="inferred from homology"/>
<reference key="1">
    <citation type="journal article" date="1999" name="Genetics">
        <title>Divergence of the hyperthermophilic archaea Pyrococcus furiosus and P. horikoshii inferred from complete genomic sequences.</title>
        <authorList>
            <person name="Maeder D.L."/>
            <person name="Weiss R.B."/>
            <person name="Dunn D.M."/>
            <person name="Cherry J.L."/>
            <person name="Gonzalez J.M."/>
            <person name="DiRuggiero J."/>
            <person name="Robb F.T."/>
        </authorList>
    </citation>
    <scope>NUCLEOTIDE SEQUENCE [LARGE SCALE GENOMIC DNA]</scope>
    <source>
        <strain>ATCC 43587 / DSM 3638 / JCM 8422 / Vc1</strain>
    </source>
</reference>
<protein>
    <recommendedName>
        <fullName evidence="1">UPF0179 protein PF1381</fullName>
    </recommendedName>
</protein>
<name>Y1381_PYRFU</name>
<dbReference type="EMBL" id="AE009950">
    <property type="protein sequence ID" value="AAL81505.1"/>
    <property type="molecule type" value="Genomic_DNA"/>
</dbReference>
<dbReference type="RefSeq" id="WP_014835397.1">
    <property type="nucleotide sequence ID" value="NZ_CP023154.1"/>
</dbReference>
<dbReference type="STRING" id="186497.PF1381"/>
<dbReference type="PaxDb" id="186497-PF1381"/>
<dbReference type="KEGG" id="pfu:PF1381"/>
<dbReference type="PATRIC" id="fig|186497.12.peg.1444"/>
<dbReference type="eggNOG" id="arCOG04477">
    <property type="taxonomic scope" value="Archaea"/>
</dbReference>
<dbReference type="HOGENOM" id="CLU_121764_0_0_2"/>
<dbReference type="OrthoDB" id="24613at2157"/>
<dbReference type="PhylomeDB" id="Q8U148"/>
<dbReference type="Proteomes" id="UP000001013">
    <property type="component" value="Chromosome"/>
</dbReference>
<dbReference type="HAMAP" id="MF_00498">
    <property type="entry name" value="UPF0179"/>
    <property type="match status" value="1"/>
</dbReference>
<dbReference type="InterPro" id="IPR005369">
    <property type="entry name" value="UPF0179"/>
</dbReference>
<dbReference type="NCBIfam" id="NF002253">
    <property type="entry name" value="PRK01177.1"/>
    <property type="match status" value="1"/>
</dbReference>
<dbReference type="PANTHER" id="PTHR40699">
    <property type="entry name" value="UPF0179 PROTEIN MJ1627"/>
    <property type="match status" value="1"/>
</dbReference>
<dbReference type="PANTHER" id="PTHR40699:SF1">
    <property type="entry name" value="UPF0179 PROTEIN MJ1627"/>
    <property type="match status" value="1"/>
</dbReference>
<dbReference type="Pfam" id="PF03684">
    <property type="entry name" value="UPF0179"/>
    <property type="match status" value="1"/>
</dbReference>
<dbReference type="PIRSF" id="PIRSF006595">
    <property type="entry name" value="UCP006595"/>
    <property type="match status" value="1"/>
</dbReference>
<evidence type="ECO:0000255" key="1">
    <source>
        <dbReference type="HAMAP-Rule" id="MF_00498"/>
    </source>
</evidence>
<keyword id="KW-1185">Reference proteome</keyword>
<organism>
    <name type="scientific">Pyrococcus furiosus (strain ATCC 43587 / DSM 3638 / JCM 8422 / Vc1)</name>
    <dbReference type="NCBI Taxonomy" id="186497"/>
    <lineage>
        <taxon>Archaea</taxon>
        <taxon>Methanobacteriati</taxon>
        <taxon>Methanobacteriota</taxon>
        <taxon>Thermococci</taxon>
        <taxon>Thermococcales</taxon>
        <taxon>Thermococcaceae</taxon>
        <taxon>Pyrococcus</taxon>
    </lineage>
</organism>
<accession>Q8U148</accession>
<feature type="chain" id="PRO_0000156874" description="UPF0179 protein PF1381">
    <location>
        <begin position="1"/>
        <end position="144"/>
    </location>
</feature>